<organism>
    <name type="scientific">Salmonella agona (strain SL483)</name>
    <dbReference type="NCBI Taxonomy" id="454166"/>
    <lineage>
        <taxon>Bacteria</taxon>
        <taxon>Pseudomonadati</taxon>
        <taxon>Pseudomonadota</taxon>
        <taxon>Gammaproteobacteria</taxon>
        <taxon>Enterobacterales</taxon>
        <taxon>Enterobacteriaceae</taxon>
        <taxon>Salmonella</taxon>
    </lineage>
</organism>
<gene>
    <name evidence="1" type="primary">hcp</name>
    <name type="ordered locus">SeAg_B0937</name>
</gene>
<name>HCP_SALA4</name>
<dbReference type="EC" id="1.7.99.1" evidence="1"/>
<dbReference type="EMBL" id="CP001138">
    <property type="protein sequence ID" value="ACH52636.1"/>
    <property type="molecule type" value="Genomic_DNA"/>
</dbReference>
<dbReference type="RefSeq" id="WP_000458785.1">
    <property type="nucleotide sequence ID" value="NC_011149.1"/>
</dbReference>
<dbReference type="SMR" id="B5F118"/>
<dbReference type="KEGG" id="sea:SeAg_B0937"/>
<dbReference type="HOGENOM" id="CLU_038344_2_0_6"/>
<dbReference type="Proteomes" id="UP000008819">
    <property type="component" value="Chromosome"/>
</dbReference>
<dbReference type="GO" id="GO:0005737">
    <property type="term" value="C:cytoplasm"/>
    <property type="evidence" value="ECO:0007669"/>
    <property type="project" value="UniProtKB-SubCell"/>
</dbReference>
<dbReference type="GO" id="GO:0051537">
    <property type="term" value="F:2 iron, 2 sulfur cluster binding"/>
    <property type="evidence" value="ECO:0007669"/>
    <property type="project" value="UniProtKB-KW"/>
</dbReference>
<dbReference type="GO" id="GO:0050418">
    <property type="term" value="F:hydroxylamine reductase activity"/>
    <property type="evidence" value="ECO:0007669"/>
    <property type="project" value="UniProtKB-UniRule"/>
</dbReference>
<dbReference type="GO" id="GO:0046872">
    <property type="term" value="F:metal ion binding"/>
    <property type="evidence" value="ECO:0007669"/>
    <property type="project" value="UniProtKB-KW"/>
</dbReference>
<dbReference type="GO" id="GO:0004601">
    <property type="term" value="F:peroxidase activity"/>
    <property type="evidence" value="ECO:0007669"/>
    <property type="project" value="TreeGrafter"/>
</dbReference>
<dbReference type="GO" id="GO:0042542">
    <property type="term" value="P:response to hydrogen peroxide"/>
    <property type="evidence" value="ECO:0007669"/>
    <property type="project" value="TreeGrafter"/>
</dbReference>
<dbReference type="CDD" id="cd01914">
    <property type="entry name" value="HCP"/>
    <property type="match status" value="1"/>
</dbReference>
<dbReference type="FunFam" id="1.20.1270.20:FF:000001">
    <property type="entry name" value="Hydroxylamine reductase"/>
    <property type="match status" value="1"/>
</dbReference>
<dbReference type="FunFam" id="1.20.1270.20:FF:000002">
    <property type="entry name" value="Hydroxylamine reductase"/>
    <property type="match status" value="1"/>
</dbReference>
<dbReference type="FunFam" id="3.40.50.2030:FF:000001">
    <property type="entry name" value="Hydroxylamine reductase"/>
    <property type="match status" value="1"/>
</dbReference>
<dbReference type="FunFam" id="3.40.50.2030:FF:000002">
    <property type="entry name" value="Hydroxylamine reductase"/>
    <property type="match status" value="1"/>
</dbReference>
<dbReference type="Gene3D" id="1.20.1270.20">
    <property type="match status" value="2"/>
</dbReference>
<dbReference type="Gene3D" id="3.40.50.2030">
    <property type="match status" value="2"/>
</dbReference>
<dbReference type="HAMAP" id="MF_00069">
    <property type="entry name" value="Hydroxylam_reduct"/>
    <property type="match status" value="1"/>
</dbReference>
<dbReference type="InterPro" id="IPR004137">
    <property type="entry name" value="HCP/CODH"/>
</dbReference>
<dbReference type="InterPro" id="IPR010048">
    <property type="entry name" value="Hydroxylam_reduct"/>
</dbReference>
<dbReference type="InterPro" id="IPR016099">
    <property type="entry name" value="Prismane-like_a/b-sand"/>
</dbReference>
<dbReference type="InterPro" id="IPR011254">
    <property type="entry name" value="Prismane-like_sf"/>
</dbReference>
<dbReference type="InterPro" id="IPR016100">
    <property type="entry name" value="Prismane_a-bundle"/>
</dbReference>
<dbReference type="NCBIfam" id="TIGR01703">
    <property type="entry name" value="hybrid_clust"/>
    <property type="match status" value="1"/>
</dbReference>
<dbReference type="NCBIfam" id="NF003658">
    <property type="entry name" value="PRK05290.1"/>
    <property type="match status" value="1"/>
</dbReference>
<dbReference type="PANTHER" id="PTHR30109">
    <property type="entry name" value="HYDROXYLAMINE REDUCTASE"/>
    <property type="match status" value="1"/>
</dbReference>
<dbReference type="PANTHER" id="PTHR30109:SF0">
    <property type="entry name" value="HYDROXYLAMINE REDUCTASE"/>
    <property type="match status" value="1"/>
</dbReference>
<dbReference type="Pfam" id="PF03063">
    <property type="entry name" value="Prismane"/>
    <property type="match status" value="1"/>
</dbReference>
<dbReference type="PIRSF" id="PIRSF000076">
    <property type="entry name" value="HCP"/>
    <property type="match status" value="1"/>
</dbReference>
<dbReference type="SUPFAM" id="SSF56821">
    <property type="entry name" value="Prismane protein-like"/>
    <property type="match status" value="1"/>
</dbReference>
<feature type="chain" id="PRO_1000092344" description="Hydroxylamine reductase">
    <location>
        <begin position="1"/>
        <end position="550"/>
    </location>
</feature>
<feature type="binding site" evidence="1">
    <location>
        <position position="3"/>
    </location>
    <ligand>
        <name>[2Fe-2S] cluster</name>
        <dbReference type="ChEBI" id="CHEBI:190135"/>
    </ligand>
</feature>
<feature type="binding site" evidence="1">
    <location>
        <position position="6"/>
    </location>
    <ligand>
        <name>[2Fe-2S] cluster</name>
        <dbReference type="ChEBI" id="CHEBI:190135"/>
    </ligand>
</feature>
<feature type="binding site" evidence="1">
    <location>
        <position position="18"/>
    </location>
    <ligand>
        <name>[2Fe-2S] cluster</name>
        <dbReference type="ChEBI" id="CHEBI:190135"/>
    </ligand>
</feature>
<feature type="binding site" evidence="1">
    <location>
        <position position="25"/>
    </location>
    <ligand>
        <name>[2Fe-2S] cluster</name>
        <dbReference type="ChEBI" id="CHEBI:190135"/>
    </ligand>
</feature>
<feature type="binding site" evidence="1">
    <location>
        <position position="249"/>
    </location>
    <ligand>
        <name>hybrid [4Fe-2O-2S] cluster</name>
        <dbReference type="ChEBI" id="CHEBI:60519"/>
    </ligand>
</feature>
<feature type="binding site" evidence="1">
    <location>
        <position position="273"/>
    </location>
    <ligand>
        <name>hybrid [4Fe-2O-2S] cluster</name>
        <dbReference type="ChEBI" id="CHEBI:60519"/>
    </ligand>
</feature>
<feature type="binding site" evidence="1">
    <location>
        <position position="317"/>
    </location>
    <ligand>
        <name>hybrid [4Fe-2O-2S] cluster</name>
        <dbReference type="ChEBI" id="CHEBI:60519"/>
    </ligand>
</feature>
<feature type="binding site" description="via persulfide group" evidence="1">
    <location>
        <position position="405"/>
    </location>
    <ligand>
        <name>hybrid [4Fe-2O-2S] cluster</name>
        <dbReference type="ChEBI" id="CHEBI:60519"/>
    </ligand>
</feature>
<feature type="binding site" evidence="1">
    <location>
        <position position="433"/>
    </location>
    <ligand>
        <name>hybrid [4Fe-2O-2S] cluster</name>
        <dbReference type="ChEBI" id="CHEBI:60519"/>
    </ligand>
</feature>
<feature type="binding site" evidence="1">
    <location>
        <position position="458"/>
    </location>
    <ligand>
        <name>hybrid [4Fe-2O-2S] cluster</name>
        <dbReference type="ChEBI" id="CHEBI:60519"/>
    </ligand>
</feature>
<feature type="binding site" evidence="1">
    <location>
        <position position="492"/>
    </location>
    <ligand>
        <name>hybrid [4Fe-2O-2S] cluster</name>
        <dbReference type="ChEBI" id="CHEBI:60519"/>
    </ligand>
</feature>
<feature type="binding site" evidence="1">
    <location>
        <position position="494"/>
    </location>
    <ligand>
        <name>hybrid [4Fe-2O-2S] cluster</name>
        <dbReference type="ChEBI" id="CHEBI:60519"/>
    </ligand>
</feature>
<feature type="modified residue" description="Cysteine persulfide" evidence="1">
    <location>
        <position position="405"/>
    </location>
</feature>
<reference key="1">
    <citation type="journal article" date="2011" name="J. Bacteriol.">
        <title>Comparative genomics of 28 Salmonella enterica isolates: evidence for CRISPR-mediated adaptive sublineage evolution.</title>
        <authorList>
            <person name="Fricke W.F."/>
            <person name="Mammel M.K."/>
            <person name="McDermott P.F."/>
            <person name="Tartera C."/>
            <person name="White D.G."/>
            <person name="Leclerc J.E."/>
            <person name="Ravel J."/>
            <person name="Cebula T.A."/>
        </authorList>
    </citation>
    <scope>NUCLEOTIDE SEQUENCE [LARGE SCALE GENOMIC DNA]</scope>
    <source>
        <strain>SL483</strain>
    </source>
</reference>
<comment type="function">
    <text evidence="1">Catalyzes the reduction of hydroxylamine to form NH(3) and H(2)O.</text>
</comment>
<comment type="catalytic activity">
    <reaction evidence="1">
        <text>A + NH4(+) + H2O = hydroxylamine + AH2 + H(+)</text>
        <dbReference type="Rhea" id="RHEA:22052"/>
        <dbReference type="ChEBI" id="CHEBI:13193"/>
        <dbReference type="ChEBI" id="CHEBI:15377"/>
        <dbReference type="ChEBI" id="CHEBI:15378"/>
        <dbReference type="ChEBI" id="CHEBI:15429"/>
        <dbReference type="ChEBI" id="CHEBI:17499"/>
        <dbReference type="ChEBI" id="CHEBI:28938"/>
        <dbReference type="EC" id="1.7.99.1"/>
    </reaction>
</comment>
<comment type="cofactor">
    <cofactor evidence="1">
        <name>[2Fe-2S] cluster</name>
        <dbReference type="ChEBI" id="CHEBI:190135"/>
    </cofactor>
    <text evidence="1">Binds 1 [2Fe-2S] cluster.</text>
</comment>
<comment type="cofactor">
    <cofactor evidence="1">
        <name>hybrid [4Fe-2O-2S] cluster</name>
        <dbReference type="ChEBI" id="CHEBI:60519"/>
    </cofactor>
    <text evidence="1">Binds 1 hybrid [4Fe-2O-2S] cluster.</text>
</comment>
<comment type="subcellular location">
    <subcellularLocation>
        <location evidence="1">Cytoplasm</location>
    </subcellularLocation>
</comment>
<comment type="similarity">
    <text evidence="1">Belongs to the HCP family.</text>
</comment>
<keyword id="KW-0001">2Fe-2S</keyword>
<keyword id="KW-0963">Cytoplasm</keyword>
<keyword id="KW-0408">Iron</keyword>
<keyword id="KW-0411">Iron-sulfur</keyword>
<keyword id="KW-0479">Metal-binding</keyword>
<keyword id="KW-0560">Oxidoreductase</keyword>
<sequence>MFCVQCEQTIRTPAGNGCSYAQGMCGKTAETSDLQDLLIAALQGLSAWAVKAREYGIINHDVDNFAPRAFFSTLTNVNFDSPRIVGYAREAIALREALKAQCLSVDANAHCDNPMADLQLVSDDLGELQRQAAEFTPNKDKAAIGENILGLRLLCLYGLKGAAAYMEHAHVLGQYDNDIYAQYHKIMAWLGTWPADMNALLECAMEIGQMNFKVMSILDAGETTKYGHPTPTQVNVKATEGKCILISGHDLKDLYNLLEQTEGTGVNVYTHGEMLPAHGYPELRKFKHLVGNYGSGWQNQQVEFARFPGPIVMTSNCIIDPTVGSYDDRIWTRSIVGWPGVSHLEGDDFGPVIAQAQQMAGFPYSEIPHLITVGFGRQTLLGAADTLIDLVSREKLRHIFLVGGCDGARGERNYFTDFATSVPDDCLILTLACGKYRFNKLEFGDIEGLPRLVDAGQCNDAYSAIILAVTLAEKLGCGVNDLPLSLVLSWFEQKAIVILLTLLSLGVKNIVTGPTAPGFFTPDLLAILNEKFGLRSVTTVEEDMKQLLSA</sequence>
<proteinExistence type="inferred from homology"/>
<evidence type="ECO:0000255" key="1">
    <source>
        <dbReference type="HAMAP-Rule" id="MF_00069"/>
    </source>
</evidence>
<protein>
    <recommendedName>
        <fullName evidence="1">Hydroxylamine reductase</fullName>
        <ecNumber evidence="1">1.7.99.1</ecNumber>
    </recommendedName>
    <alternativeName>
        <fullName evidence="1">Hybrid-cluster protein</fullName>
        <shortName evidence="1">HCP</shortName>
    </alternativeName>
    <alternativeName>
        <fullName evidence="1">Prismane protein</fullName>
    </alternativeName>
</protein>
<accession>B5F118</accession>